<proteinExistence type="inferred from homology"/>
<accession>Q2SBD4</accession>
<evidence type="ECO:0000255" key="1">
    <source>
        <dbReference type="HAMAP-Rule" id="MF_01694"/>
    </source>
</evidence>
<evidence type="ECO:0000255" key="2">
    <source>
        <dbReference type="PROSITE-ProRule" id="PRU01266"/>
    </source>
</evidence>
<name>BIOB_HAHCH</name>
<gene>
    <name evidence="1" type="primary">bioB</name>
    <name type="ordered locus">HCH_05371</name>
</gene>
<comment type="function">
    <text evidence="1">Catalyzes the conversion of dethiobiotin (DTB) to biotin by the insertion of a sulfur atom into dethiobiotin via a radical-based mechanism.</text>
</comment>
<comment type="catalytic activity">
    <reaction evidence="1">
        <text>(4R,5S)-dethiobiotin + (sulfur carrier)-SH + 2 reduced [2Fe-2S]-[ferredoxin] + 2 S-adenosyl-L-methionine = (sulfur carrier)-H + biotin + 2 5'-deoxyadenosine + 2 L-methionine + 2 oxidized [2Fe-2S]-[ferredoxin]</text>
        <dbReference type="Rhea" id="RHEA:22060"/>
        <dbReference type="Rhea" id="RHEA-COMP:10000"/>
        <dbReference type="Rhea" id="RHEA-COMP:10001"/>
        <dbReference type="Rhea" id="RHEA-COMP:14737"/>
        <dbReference type="Rhea" id="RHEA-COMP:14739"/>
        <dbReference type="ChEBI" id="CHEBI:17319"/>
        <dbReference type="ChEBI" id="CHEBI:29917"/>
        <dbReference type="ChEBI" id="CHEBI:33737"/>
        <dbReference type="ChEBI" id="CHEBI:33738"/>
        <dbReference type="ChEBI" id="CHEBI:57586"/>
        <dbReference type="ChEBI" id="CHEBI:57844"/>
        <dbReference type="ChEBI" id="CHEBI:59789"/>
        <dbReference type="ChEBI" id="CHEBI:64428"/>
        <dbReference type="ChEBI" id="CHEBI:149473"/>
        <dbReference type="EC" id="2.8.1.6"/>
    </reaction>
</comment>
<comment type="cofactor">
    <cofactor evidence="1">
        <name>[4Fe-4S] cluster</name>
        <dbReference type="ChEBI" id="CHEBI:49883"/>
    </cofactor>
    <text evidence="1">Binds 1 [4Fe-4S] cluster. The cluster is coordinated with 3 cysteines and an exchangeable S-adenosyl-L-methionine.</text>
</comment>
<comment type="cofactor">
    <cofactor evidence="1">
        <name>[2Fe-2S] cluster</name>
        <dbReference type="ChEBI" id="CHEBI:190135"/>
    </cofactor>
    <text evidence="1">Binds 1 [2Fe-2S] cluster. The cluster is coordinated with 3 cysteines and 1 arginine.</text>
</comment>
<comment type="pathway">
    <text evidence="1">Cofactor biosynthesis; biotin biosynthesis; biotin from 7,8-diaminononanoate: step 2/2.</text>
</comment>
<comment type="subunit">
    <text evidence="1">Homodimer.</text>
</comment>
<comment type="similarity">
    <text evidence="1">Belongs to the radical SAM superfamily. Biotin synthase family.</text>
</comment>
<protein>
    <recommendedName>
        <fullName evidence="1">Biotin synthase</fullName>
        <ecNumber evidence="1">2.8.1.6</ecNumber>
    </recommendedName>
</protein>
<reference key="1">
    <citation type="journal article" date="2005" name="Nucleic Acids Res.">
        <title>Genomic blueprint of Hahella chejuensis, a marine microbe producing an algicidal agent.</title>
        <authorList>
            <person name="Jeong H."/>
            <person name="Yim J.H."/>
            <person name="Lee C."/>
            <person name="Choi S.-H."/>
            <person name="Park Y.K."/>
            <person name="Yoon S.H."/>
            <person name="Hur C.-G."/>
            <person name="Kang H.-Y."/>
            <person name="Kim D."/>
            <person name="Lee H.H."/>
            <person name="Park K.H."/>
            <person name="Park S.-H."/>
            <person name="Park H.-S."/>
            <person name="Lee H.K."/>
            <person name="Oh T.K."/>
            <person name="Kim J.F."/>
        </authorList>
    </citation>
    <scope>NUCLEOTIDE SEQUENCE [LARGE SCALE GENOMIC DNA]</scope>
    <source>
        <strain>KCTC 2396</strain>
    </source>
</reference>
<dbReference type="EC" id="2.8.1.6" evidence="1"/>
<dbReference type="EMBL" id="CP000155">
    <property type="protein sequence ID" value="ABC32040.1"/>
    <property type="molecule type" value="Genomic_DNA"/>
</dbReference>
<dbReference type="RefSeq" id="WP_011399104.1">
    <property type="nucleotide sequence ID" value="NC_007645.1"/>
</dbReference>
<dbReference type="SMR" id="Q2SBD4"/>
<dbReference type="STRING" id="349521.HCH_05371"/>
<dbReference type="KEGG" id="hch:HCH_05371"/>
<dbReference type="eggNOG" id="COG0502">
    <property type="taxonomic scope" value="Bacteria"/>
</dbReference>
<dbReference type="HOGENOM" id="CLU_033172_1_2_6"/>
<dbReference type="OrthoDB" id="9786826at2"/>
<dbReference type="UniPathway" id="UPA00078">
    <property type="reaction ID" value="UER00162"/>
</dbReference>
<dbReference type="Proteomes" id="UP000000238">
    <property type="component" value="Chromosome"/>
</dbReference>
<dbReference type="GO" id="GO:0051537">
    <property type="term" value="F:2 iron, 2 sulfur cluster binding"/>
    <property type="evidence" value="ECO:0007669"/>
    <property type="project" value="UniProtKB-KW"/>
</dbReference>
<dbReference type="GO" id="GO:0051539">
    <property type="term" value="F:4 iron, 4 sulfur cluster binding"/>
    <property type="evidence" value="ECO:0007669"/>
    <property type="project" value="UniProtKB-KW"/>
</dbReference>
<dbReference type="GO" id="GO:0004076">
    <property type="term" value="F:biotin synthase activity"/>
    <property type="evidence" value="ECO:0007669"/>
    <property type="project" value="UniProtKB-UniRule"/>
</dbReference>
<dbReference type="GO" id="GO:0005506">
    <property type="term" value="F:iron ion binding"/>
    <property type="evidence" value="ECO:0007669"/>
    <property type="project" value="UniProtKB-UniRule"/>
</dbReference>
<dbReference type="GO" id="GO:0009102">
    <property type="term" value="P:biotin biosynthetic process"/>
    <property type="evidence" value="ECO:0007669"/>
    <property type="project" value="UniProtKB-UniRule"/>
</dbReference>
<dbReference type="CDD" id="cd01335">
    <property type="entry name" value="Radical_SAM"/>
    <property type="match status" value="1"/>
</dbReference>
<dbReference type="FunFam" id="3.20.20.70:FF:000011">
    <property type="entry name" value="Biotin synthase"/>
    <property type="match status" value="1"/>
</dbReference>
<dbReference type="Gene3D" id="3.20.20.70">
    <property type="entry name" value="Aldolase class I"/>
    <property type="match status" value="1"/>
</dbReference>
<dbReference type="HAMAP" id="MF_01694">
    <property type="entry name" value="BioB"/>
    <property type="match status" value="1"/>
</dbReference>
<dbReference type="InterPro" id="IPR013785">
    <property type="entry name" value="Aldolase_TIM"/>
</dbReference>
<dbReference type="InterPro" id="IPR010722">
    <property type="entry name" value="BATS_dom"/>
</dbReference>
<dbReference type="InterPro" id="IPR002684">
    <property type="entry name" value="Biotin_synth/BioAB"/>
</dbReference>
<dbReference type="InterPro" id="IPR024177">
    <property type="entry name" value="Biotin_synthase"/>
</dbReference>
<dbReference type="InterPro" id="IPR006638">
    <property type="entry name" value="Elp3/MiaA/NifB-like_rSAM"/>
</dbReference>
<dbReference type="InterPro" id="IPR007197">
    <property type="entry name" value="rSAM"/>
</dbReference>
<dbReference type="NCBIfam" id="TIGR00433">
    <property type="entry name" value="bioB"/>
    <property type="match status" value="1"/>
</dbReference>
<dbReference type="PANTHER" id="PTHR22976">
    <property type="entry name" value="BIOTIN SYNTHASE"/>
    <property type="match status" value="1"/>
</dbReference>
<dbReference type="PANTHER" id="PTHR22976:SF2">
    <property type="entry name" value="BIOTIN SYNTHASE, MITOCHONDRIAL"/>
    <property type="match status" value="1"/>
</dbReference>
<dbReference type="Pfam" id="PF06968">
    <property type="entry name" value="BATS"/>
    <property type="match status" value="1"/>
</dbReference>
<dbReference type="Pfam" id="PF04055">
    <property type="entry name" value="Radical_SAM"/>
    <property type="match status" value="1"/>
</dbReference>
<dbReference type="PIRSF" id="PIRSF001619">
    <property type="entry name" value="Biotin_synth"/>
    <property type="match status" value="1"/>
</dbReference>
<dbReference type="SFLD" id="SFLDG01060">
    <property type="entry name" value="BATS_domain_containing"/>
    <property type="match status" value="1"/>
</dbReference>
<dbReference type="SFLD" id="SFLDF00272">
    <property type="entry name" value="biotin_synthase"/>
    <property type="match status" value="1"/>
</dbReference>
<dbReference type="SMART" id="SM00876">
    <property type="entry name" value="BATS"/>
    <property type="match status" value="1"/>
</dbReference>
<dbReference type="SMART" id="SM00729">
    <property type="entry name" value="Elp3"/>
    <property type="match status" value="1"/>
</dbReference>
<dbReference type="SUPFAM" id="SSF102114">
    <property type="entry name" value="Radical SAM enzymes"/>
    <property type="match status" value="1"/>
</dbReference>
<dbReference type="PROSITE" id="PS51918">
    <property type="entry name" value="RADICAL_SAM"/>
    <property type="match status" value="1"/>
</dbReference>
<feature type="chain" id="PRO_0000381420" description="Biotin synthase">
    <location>
        <begin position="1"/>
        <end position="354"/>
    </location>
</feature>
<feature type="domain" description="Radical SAM core" evidence="2">
    <location>
        <begin position="40"/>
        <end position="258"/>
    </location>
</feature>
<feature type="binding site" evidence="1">
    <location>
        <position position="55"/>
    </location>
    <ligand>
        <name>[4Fe-4S] cluster</name>
        <dbReference type="ChEBI" id="CHEBI:49883"/>
        <note>4Fe-4S-S-AdoMet</note>
    </ligand>
</feature>
<feature type="binding site" evidence="1">
    <location>
        <position position="59"/>
    </location>
    <ligand>
        <name>[4Fe-4S] cluster</name>
        <dbReference type="ChEBI" id="CHEBI:49883"/>
        <note>4Fe-4S-S-AdoMet</note>
    </ligand>
</feature>
<feature type="binding site" evidence="1">
    <location>
        <position position="62"/>
    </location>
    <ligand>
        <name>[4Fe-4S] cluster</name>
        <dbReference type="ChEBI" id="CHEBI:49883"/>
        <note>4Fe-4S-S-AdoMet</note>
    </ligand>
</feature>
<feature type="binding site" evidence="1">
    <location>
        <position position="99"/>
    </location>
    <ligand>
        <name>[2Fe-2S] cluster</name>
        <dbReference type="ChEBI" id="CHEBI:190135"/>
    </ligand>
</feature>
<feature type="binding site" evidence="1">
    <location>
        <position position="130"/>
    </location>
    <ligand>
        <name>[2Fe-2S] cluster</name>
        <dbReference type="ChEBI" id="CHEBI:190135"/>
    </ligand>
</feature>
<feature type="binding site" evidence="1">
    <location>
        <position position="190"/>
    </location>
    <ligand>
        <name>[2Fe-2S] cluster</name>
        <dbReference type="ChEBI" id="CHEBI:190135"/>
    </ligand>
</feature>
<feature type="binding site" evidence="1">
    <location>
        <position position="262"/>
    </location>
    <ligand>
        <name>[2Fe-2S] cluster</name>
        <dbReference type="ChEBI" id="CHEBI:190135"/>
    </ligand>
</feature>
<sequence length="354" mass="39840">MQSPIRHDWSLEEVEALFALPFNDLLFQAQVTHRRNFDPNEVQVSTLLSIKTGACPEDCKYCPQSGHYNTGLEKEKLLEVEKVVNEAKAAKEKGASRFCMGAAWRNPRAKDMPYVLEMVKQVKSLGMETCMTLGMLTADQASELAGAGLDYYNHNLDTSENYYGEIITTRTYSDRLETLQNVRDAGMKVCCGGIMGMGESARDRAALLAQLANLPSHPESVPINMLVKVKGTPLEVQEDIDPFDFIRTIAVARILMPRSHVRLSAGREDMNEQMQAMCFLAGANSIFYGEKLLTTPNPEADKDMMLFKKLGIRPEQREQAHSEDQQEAYLHDVIQAHDQQQRMESMFYDATKTA</sequence>
<keyword id="KW-0001">2Fe-2S</keyword>
<keyword id="KW-0004">4Fe-4S</keyword>
<keyword id="KW-0093">Biotin biosynthesis</keyword>
<keyword id="KW-0408">Iron</keyword>
<keyword id="KW-0411">Iron-sulfur</keyword>
<keyword id="KW-0479">Metal-binding</keyword>
<keyword id="KW-1185">Reference proteome</keyword>
<keyword id="KW-0949">S-adenosyl-L-methionine</keyword>
<keyword id="KW-0808">Transferase</keyword>
<organism>
    <name type="scientific">Hahella chejuensis (strain KCTC 2396)</name>
    <dbReference type="NCBI Taxonomy" id="349521"/>
    <lineage>
        <taxon>Bacteria</taxon>
        <taxon>Pseudomonadati</taxon>
        <taxon>Pseudomonadota</taxon>
        <taxon>Gammaproteobacteria</taxon>
        <taxon>Oceanospirillales</taxon>
        <taxon>Hahellaceae</taxon>
        <taxon>Hahella</taxon>
    </lineage>
</organism>